<organism>
    <name type="scientific">Drosophila melanogaster</name>
    <name type="common">Fruit fly</name>
    <dbReference type="NCBI Taxonomy" id="7227"/>
    <lineage>
        <taxon>Eukaryota</taxon>
        <taxon>Metazoa</taxon>
        <taxon>Ecdysozoa</taxon>
        <taxon>Arthropoda</taxon>
        <taxon>Hexapoda</taxon>
        <taxon>Insecta</taxon>
        <taxon>Pterygota</taxon>
        <taxon>Neoptera</taxon>
        <taxon>Endopterygota</taxon>
        <taxon>Diptera</taxon>
        <taxon>Brachycera</taxon>
        <taxon>Muscomorpha</taxon>
        <taxon>Ephydroidea</taxon>
        <taxon>Drosophilidae</taxon>
        <taxon>Drosophila</taxon>
        <taxon>Sophophora</taxon>
    </lineage>
</organism>
<proteinExistence type="evidence at protein level"/>
<sequence length="622" mass="71300">MSSKSRRAGTATPQPGNTSTPRPPSAGPQPPPPSTHSQTASSPLSPTRHSRVAEKVELQNLNDRLATYIDRVRNLETENSRLTIEVQTTRDTVTRETTNIKNIFEAELLETRRLLDDTARDRARAEIDIKRLWEENEELKNKLDKKTKECTTAEGNVRMYESRANELNNKYNQANADRKKLNEDLNEALKELERLRKQFEETRKNLEQETLSRVDLENTIQSLREELSFKDQIHSQEINESRRIKQTEYSEIDGRLSSEYDAKLKQSLQELRAQYEEQMQINRDEIQSLYEDKIQRLQEAAARTSNSTHKSIEELRSTRVRIDALNANINELEQANADLNARIRDLERQLDNDRERHGQEIDLLEKELIRLREEMTQQLKEYQDLMDIKVSLDLEIAAYDKLLVGEEARLNITPATNTATVQSFSQSLRNSTRATPSRRTPSAAVKRKRAVVDESEDHSVADYYVSASAKGNVEIKEIDPEGKFVRLFNKGSEEVAIGGWQLQRLINEKGPSTTYKFHRSVRIEPNGVITVWSADTKASHEPPSSLVMKSQKWVSADNTRTILLNSEGEAVANLDRIKRIVSQHTSSSRLSRRRSVTAVDGNEQLYHQQGDPQQSNEKCAIM</sequence>
<gene>
    <name evidence="20" type="primary">Lam</name>
    <name evidence="20" type="ORF">CG6944</name>
</gene>
<keyword id="KW-0007">Acetylation</keyword>
<keyword id="KW-0175">Coiled coil</keyword>
<keyword id="KW-0963">Cytoplasm</keyword>
<keyword id="KW-0206">Cytoskeleton</keyword>
<keyword id="KW-0403">Intermediate filament</keyword>
<keyword id="KW-0449">Lipoprotein</keyword>
<keyword id="KW-0472">Membrane</keyword>
<keyword id="KW-0488">Methylation</keyword>
<keyword id="KW-0539">Nucleus</keyword>
<keyword id="KW-0597">Phosphoprotein</keyword>
<keyword id="KW-0636">Prenylation</keyword>
<keyword id="KW-1185">Reference proteome</keyword>
<accession>P08928</accession>
<accession>Q9VMQ0</accession>
<name>LAM0_DROME</name>
<evidence type="ECO:0000250" key="1"/>
<evidence type="ECO:0000255" key="2"/>
<evidence type="ECO:0000255" key="3">
    <source>
        <dbReference type="PROSITE-ProRule" id="PRU01187"/>
    </source>
</evidence>
<evidence type="ECO:0000255" key="4">
    <source>
        <dbReference type="PROSITE-ProRule" id="PRU01188"/>
    </source>
</evidence>
<evidence type="ECO:0000256" key="5">
    <source>
        <dbReference type="SAM" id="MobiDB-lite"/>
    </source>
</evidence>
<evidence type="ECO:0000269" key="6">
    <source>
    </source>
</evidence>
<evidence type="ECO:0000269" key="7">
    <source>
    </source>
</evidence>
<evidence type="ECO:0000269" key="8">
    <source>
    </source>
</evidence>
<evidence type="ECO:0000269" key="9">
    <source>
    </source>
</evidence>
<evidence type="ECO:0000269" key="10">
    <source>
    </source>
</evidence>
<evidence type="ECO:0000269" key="11">
    <source>
    </source>
</evidence>
<evidence type="ECO:0000269" key="12">
    <source>
    </source>
</evidence>
<evidence type="ECO:0000269" key="13">
    <source>
    </source>
</evidence>
<evidence type="ECO:0000269" key="14">
    <source>
    </source>
</evidence>
<evidence type="ECO:0000269" key="15">
    <source>
    </source>
</evidence>
<evidence type="ECO:0000269" key="16">
    <source>
    </source>
</evidence>
<evidence type="ECO:0000269" key="17">
    <source>
    </source>
</evidence>
<evidence type="ECO:0000269" key="18">
    <source>
    </source>
</evidence>
<evidence type="ECO:0000305" key="19"/>
<evidence type="ECO:0000312" key="20">
    <source>
        <dbReference type="FlyBase" id="FBgn0002525"/>
    </source>
</evidence>
<comment type="function">
    <text evidence="6 7 9 13 14">Lamins are components of the nuclear lamina, a fibrous layer on the nucleoplasmic side of the inner nuclear membrane, which is thought to provide a framework for the nuclear envelope and may also interact with chromatin (PubMed:15035436, PubMed:3126192). May have a role in the localization of the LEM domain proteins Ote, bocks and MAN1 to the nuclear membrane (PubMed:15035436, PubMed:16439308). In spermatocytes, plays a role in maintaining type-A lamin LamC nuclear localization; regulates meiotic cytokinesis by maintaining the structure of the spindle envelope, and by contributing to the formation of the contractile ring and central spindle (PubMed:27402967). Required for nuclear migration and to link the microtubule organizing center (MTOC) to the nucleus (PubMed:14617811). In addition, is required for nuclear envelope localization of klar (PubMed:14617811).</text>
</comment>
<comment type="subunit">
    <text evidence="8 9 12 18">Interacts directly with LBR (PubMed:15054108). Interacts with MAN1 (PubMed:16439308). Interacts with Ote (PubMed:22751930, PubMed:9632815).</text>
</comment>
<comment type="subcellular location">
    <subcellularLocation>
        <location evidence="15 17">Nucleus</location>
    </subcellularLocation>
    <subcellularLocation>
        <location evidence="9">Nucleus inner membrane</location>
    </subcellularLocation>
    <subcellularLocation>
        <location evidence="7 9 16 17 18">Nucleus envelope</location>
    </subcellularLocation>
    <subcellularLocation>
        <location evidence="11">Nucleus lamina</location>
    </subcellularLocation>
    <subcellularLocation>
        <location evidence="9 13">Cytoplasm</location>
        <location evidence="9 13">Cytoskeleton</location>
        <location evidence="9 13">Spindle pole</location>
    </subcellularLocation>
    <subcellularLocation>
        <location evidence="17">Cytoplasm</location>
    </subcellularLocation>
    <text evidence="9 13 15 17">Nuclear periphery (PubMed:7593280). At metaphase and anaphase, weakly expressed in the nuclear envelope and spindle poles (PubMed:16439308). Expression in oocyte cytoplasm increases after stages 6 to 7 of egg development (PubMed:9199347). In spermatocytes detected at the spindle envelope, spindle poles and astral membrane throughout meiosis I, whereas mostly depleted in meiosis II (PubMed:27402967). Colocalizes with nuclear pore complex component Nup107 throughout meiosis I (PubMed:27402967).</text>
</comment>
<comment type="tissue specificity">
    <text evidence="13 15">Constitutively expressed in all tissues (at protein level) (PubMed:7593280). Expressed in spermatocytes (at protein level) (PubMed:27402967).</text>
</comment>
<comment type="developmental stage">
    <text evidence="15">Constitutively expressed in all developmental stages, especially during the first 6-9 hours.</text>
</comment>
<comment type="PTM">
    <text evidence="10 14">Three forms of lamin have been identified in D.melanogaster, lamin Dm0 is rapidly processed to lamin Dm1 in the cytoplasm, Dm1 is then assembled in the nuclear envelope and is then phosphorylated, forming lamin Dm2.</text>
</comment>
<comment type="disruption phenotype">
    <text evidence="13">RNAi-mediated knockdown in spermatocytes results in spindle envelope disintegration, failure to form contractile rings and central spindle microtubules during meiosis I resulting in abnormal cytokinesis and multinuclear cell formation.</text>
</comment>
<comment type="similarity">
    <text evidence="4">Belongs to the intermediate filament family.</text>
</comment>
<reference key="1">
    <citation type="journal article" date="1988" name="J. Cell Biol.">
        <title>Drosophila nuclear lamin precursor Dm0 is translated from either of two developmentally regulated mRNA species apparently encoded by a single gene.</title>
        <authorList>
            <person name="Gruenbaum Y."/>
            <person name="Landesman Y."/>
            <person name="Drees B."/>
            <person name="Bare J.W."/>
            <person name="Saumweber H."/>
            <person name="Paddy M.R."/>
            <person name="Sedat J.W."/>
            <person name="Smith D.E."/>
            <person name="Benton B.M."/>
            <person name="Fisher P.A."/>
        </authorList>
    </citation>
    <scope>NUCLEOTIDE SEQUENCE [MRNA]</scope>
    <scope>FUNCTION</scope>
    <scope>PHOSPHORYLATION AT THR-10; THR-12; THR-20; SER-25; SER-34; THR-39; SER-41; SER-42; SER-45; THR-47; SER-235; TYR-249; SER-250; SER-311; THR-413; THR-435; SER-442; SER-455; SER-459: SER-595 AND SER-615</scope>
    <source>
        <tissue>Embryo</tissue>
    </source>
</reference>
<reference key="2">
    <citation type="submission" date="1994-01" db="EMBL/GenBank/DDBJ databases">
        <authorList>
            <person name="Stuurman N."/>
            <person name="Maus N."/>
            <person name="Fisher P.A."/>
        </authorList>
    </citation>
    <scope>SEQUENCE REVISION TO 24-39 AND 254-263</scope>
</reference>
<reference key="3">
    <citation type="journal article" date="1990" name="Genomics">
        <title>Molecular analysis of the Drosophila nuclear lamin gene.</title>
        <authorList>
            <person name="Osman M."/>
            <person name="Paz M."/>
            <person name="Landesman Y."/>
            <person name="Fainsod A."/>
            <person name="Gruenbaum Y."/>
        </authorList>
    </citation>
    <scope>NUCLEOTIDE SEQUENCE [GENOMIC DNA]</scope>
</reference>
<reference key="4">
    <citation type="journal article" date="2000" name="Science">
        <title>The genome sequence of Drosophila melanogaster.</title>
        <authorList>
            <person name="Adams M.D."/>
            <person name="Celniker S.E."/>
            <person name="Holt R.A."/>
            <person name="Evans C.A."/>
            <person name="Gocayne J.D."/>
            <person name="Amanatides P.G."/>
            <person name="Scherer S.E."/>
            <person name="Li P.W."/>
            <person name="Hoskins R.A."/>
            <person name="Galle R.F."/>
            <person name="George R.A."/>
            <person name="Lewis S.E."/>
            <person name="Richards S."/>
            <person name="Ashburner M."/>
            <person name="Henderson S.N."/>
            <person name="Sutton G.G."/>
            <person name="Wortman J.R."/>
            <person name="Yandell M.D."/>
            <person name="Zhang Q."/>
            <person name="Chen L.X."/>
            <person name="Brandon R.C."/>
            <person name="Rogers Y.-H.C."/>
            <person name="Blazej R.G."/>
            <person name="Champe M."/>
            <person name="Pfeiffer B.D."/>
            <person name="Wan K.H."/>
            <person name="Doyle C."/>
            <person name="Baxter E.G."/>
            <person name="Helt G."/>
            <person name="Nelson C.R."/>
            <person name="Miklos G.L.G."/>
            <person name="Abril J.F."/>
            <person name="Agbayani A."/>
            <person name="An H.-J."/>
            <person name="Andrews-Pfannkoch C."/>
            <person name="Baldwin D."/>
            <person name="Ballew R.M."/>
            <person name="Basu A."/>
            <person name="Baxendale J."/>
            <person name="Bayraktaroglu L."/>
            <person name="Beasley E.M."/>
            <person name="Beeson K.Y."/>
            <person name="Benos P.V."/>
            <person name="Berman B.P."/>
            <person name="Bhandari D."/>
            <person name="Bolshakov S."/>
            <person name="Borkova D."/>
            <person name="Botchan M.R."/>
            <person name="Bouck J."/>
            <person name="Brokstein P."/>
            <person name="Brottier P."/>
            <person name="Burtis K.C."/>
            <person name="Busam D.A."/>
            <person name="Butler H."/>
            <person name="Cadieu E."/>
            <person name="Center A."/>
            <person name="Chandra I."/>
            <person name="Cherry J.M."/>
            <person name="Cawley S."/>
            <person name="Dahlke C."/>
            <person name="Davenport L.B."/>
            <person name="Davies P."/>
            <person name="de Pablos B."/>
            <person name="Delcher A."/>
            <person name="Deng Z."/>
            <person name="Mays A.D."/>
            <person name="Dew I."/>
            <person name="Dietz S.M."/>
            <person name="Dodson K."/>
            <person name="Doup L.E."/>
            <person name="Downes M."/>
            <person name="Dugan-Rocha S."/>
            <person name="Dunkov B.C."/>
            <person name="Dunn P."/>
            <person name="Durbin K.J."/>
            <person name="Evangelista C.C."/>
            <person name="Ferraz C."/>
            <person name="Ferriera S."/>
            <person name="Fleischmann W."/>
            <person name="Fosler C."/>
            <person name="Gabrielian A.E."/>
            <person name="Garg N.S."/>
            <person name="Gelbart W.M."/>
            <person name="Glasser K."/>
            <person name="Glodek A."/>
            <person name="Gong F."/>
            <person name="Gorrell J.H."/>
            <person name="Gu Z."/>
            <person name="Guan P."/>
            <person name="Harris M."/>
            <person name="Harris N.L."/>
            <person name="Harvey D.A."/>
            <person name="Heiman T.J."/>
            <person name="Hernandez J.R."/>
            <person name="Houck J."/>
            <person name="Hostin D."/>
            <person name="Houston K.A."/>
            <person name="Howland T.J."/>
            <person name="Wei M.-H."/>
            <person name="Ibegwam C."/>
            <person name="Jalali M."/>
            <person name="Kalush F."/>
            <person name="Karpen G.H."/>
            <person name="Ke Z."/>
            <person name="Kennison J.A."/>
            <person name="Ketchum K.A."/>
            <person name="Kimmel B.E."/>
            <person name="Kodira C.D."/>
            <person name="Kraft C.L."/>
            <person name="Kravitz S."/>
            <person name="Kulp D."/>
            <person name="Lai Z."/>
            <person name="Lasko P."/>
            <person name="Lei Y."/>
            <person name="Levitsky A.A."/>
            <person name="Li J.H."/>
            <person name="Li Z."/>
            <person name="Liang Y."/>
            <person name="Lin X."/>
            <person name="Liu X."/>
            <person name="Mattei B."/>
            <person name="McIntosh T.C."/>
            <person name="McLeod M.P."/>
            <person name="McPherson D."/>
            <person name="Merkulov G."/>
            <person name="Milshina N.V."/>
            <person name="Mobarry C."/>
            <person name="Morris J."/>
            <person name="Moshrefi A."/>
            <person name="Mount S.M."/>
            <person name="Moy M."/>
            <person name="Murphy B."/>
            <person name="Murphy L."/>
            <person name="Muzny D.M."/>
            <person name="Nelson D.L."/>
            <person name="Nelson D.R."/>
            <person name="Nelson K.A."/>
            <person name="Nixon K."/>
            <person name="Nusskern D.R."/>
            <person name="Pacleb J.M."/>
            <person name="Palazzolo M."/>
            <person name="Pittman G.S."/>
            <person name="Pan S."/>
            <person name="Pollard J."/>
            <person name="Puri V."/>
            <person name="Reese M.G."/>
            <person name="Reinert K."/>
            <person name="Remington K."/>
            <person name="Saunders R.D.C."/>
            <person name="Scheeler F."/>
            <person name="Shen H."/>
            <person name="Shue B.C."/>
            <person name="Siden-Kiamos I."/>
            <person name="Simpson M."/>
            <person name="Skupski M.P."/>
            <person name="Smith T.J."/>
            <person name="Spier E."/>
            <person name="Spradling A.C."/>
            <person name="Stapleton M."/>
            <person name="Strong R."/>
            <person name="Sun E."/>
            <person name="Svirskas R."/>
            <person name="Tector C."/>
            <person name="Turner R."/>
            <person name="Venter E."/>
            <person name="Wang A.H."/>
            <person name="Wang X."/>
            <person name="Wang Z.-Y."/>
            <person name="Wassarman D.A."/>
            <person name="Weinstock G.M."/>
            <person name="Weissenbach J."/>
            <person name="Williams S.M."/>
            <person name="Woodage T."/>
            <person name="Worley K.C."/>
            <person name="Wu D."/>
            <person name="Yang S."/>
            <person name="Yao Q.A."/>
            <person name="Ye J."/>
            <person name="Yeh R.-F."/>
            <person name="Zaveri J.S."/>
            <person name="Zhan M."/>
            <person name="Zhang G."/>
            <person name="Zhao Q."/>
            <person name="Zheng L."/>
            <person name="Zheng X.H."/>
            <person name="Zhong F.N."/>
            <person name="Zhong W."/>
            <person name="Zhou X."/>
            <person name="Zhu S.C."/>
            <person name="Zhu X."/>
            <person name="Smith H.O."/>
            <person name="Gibbs R.A."/>
            <person name="Myers E.W."/>
            <person name="Rubin G.M."/>
            <person name="Venter J.C."/>
        </authorList>
    </citation>
    <scope>NUCLEOTIDE SEQUENCE [LARGE SCALE GENOMIC DNA]</scope>
    <source>
        <strain>Berkeley</strain>
    </source>
</reference>
<reference key="5">
    <citation type="journal article" date="2002" name="Genome Biol.">
        <title>Annotation of the Drosophila melanogaster euchromatic genome: a systematic review.</title>
        <authorList>
            <person name="Misra S."/>
            <person name="Crosby M.A."/>
            <person name="Mungall C.J."/>
            <person name="Matthews B.B."/>
            <person name="Campbell K.S."/>
            <person name="Hradecky P."/>
            <person name="Huang Y."/>
            <person name="Kaminker J.S."/>
            <person name="Millburn G.H."/>
            <person name="Prochnik S.E."/>
            <person name="Smith C.D."/>
            <person name="Tupy J.L."/>
            <person name="Whitfield E.J."/>
            <person name="Bayraktaroglu L."/>
            <person name="Berman B.P."/>
            <person name="Bettencourt B.R."/>
            <person name="Celniker S.E."/>
            <person name="de Grey A.D.N.J."/>
            <person name="Drysdale R.A."/>
            <person name="Harris N.L."/>
            <person name="Richter J."/>
            <person name="Russo S."/>
            <person name="Schroeder A.J."/>
            <person name="Shu S.Q."/>
            <person name="Stapleton M."/>
            <person name="Yamada C."/>
            <person name="Ashburner M."/>
            <person name="Gelbart W.M."/>
            <person name="Rubin G.M."/>
            <person name="Lewis S.E."/>
        </authorList>
    </citation>
    <scope>GENOME REANNOTATION</scope>
    <source>
        <strain>Berkeley</strain>
    </source>
</reference>
<reference key="6">
    <citation type="journal article" date="2002" name="Genome Biol.">
        <title>A Drosophila full-length cDNA resource.</title>
        <authorList>
            <person name="Stapleton M."/>
            <person name="Carlson J.W."/>
            <person name="Brokstein P."/>
            <person name="Yu C."/>
            <person name="Champe M."/>
            <person name="George R.A."/>
            <person name="Guarin H."/>
            <person name="Kronmiller B."/>
            <person name="Pacleb J.M."/>
            <person name="Park S."/>
            <person name="Wan K.H."/>
            <person name="Rubin G.M."/>
            <person name="Celniker S.E."/>
        </authorList>
    </citation>
    <scope>NUCLEOTIDE SEQUENCE [LARGE SCALE MRNA]</scope>
    <source>
        <strain>Berkeley</strain>
        <tissue>Embryo</tissue>
    </source>
</reference>
<reference key="7">
    <citation type="journal article" date="1995" name="J. Cell Sci.">
        <title>Expression of Drosophila lamin C is developmentally regulated: analogies with vertebrate A-type lamins.</title>
        <authorList>
            <person name="Riemer D."/>
            <person name="Stuurman N."/>
            <person name="Berrios M."/>
            <person name="Hunter C."/>
            <person name="Fisher P.A."/>
            <person name="Weber K."/>
        </authorList>
    </citation>
    <scope>SUBCELLULAR LOCATION</scope>
    <scope>TISSUE SPECIFICITY</scope>
    <scope>DEVELOPMENTAL STAGE</scope>
</reference>
<reference key="8">
    <citation type="journal article" date="1997" name="J. Biol. Chem.">
        <title>Distinct regions specify the targeting of otefin to the nucleoplasmic side of the nuclear envelope.</title>
        <authorList>
            <person name="Ashery-Padan R."/>
            <person name="Weiss A.M."/>
            <person name="Feinstein N."/>
            <person name="Gruenbaum Y."/>
        </authorList>
    </citation>
    <scope>SUBCELLULAR LOCATION</scope>
</reference>
<reference key="9">
    <citation type="journal article" date="1997" name="Mol. Cell. Biol.">
        <title>Localization and posttranslational modifications of otefin, a protein required for vesicle attachment to chromatin, during Drosophila melanogaster development.</title>
        <authorList>
            <person name="Ashery-Padan R."/>
            <person name="Ulitzur N."/>
            <person name="Arbel A."/>
            <person name="Goldberg M."/>
            <person name="Weiss A.M."/>
            <person name="Maus N."/>
            <person name="Fisher P.A."/>
            <person name="Gruenbaum Y."/>
        </authorList>
    </citation>
    <scope>SUBCELLULAR LOCATION</scope>
</reference>
<reference key="10">
    <citation type="journal article" date="1998" name="Mol. Cell. Biol.">
        <title>Interactions among Drosophila nuclear envelope proteins lamin, otefin, and YA.</title>
        <authorList>
            <person name="Goldberg M."/>
            <person name="Lu H."/>
            <person name="Stuurman N."/>
            <person name="Ashery-Padan R."/>
            <person name="Weiss A.M."/>
            <person name="Yu J."/>
            <person name="Bhattacharyya D."/>
            <person name="Fisher P.A."/>
            <person name="Gruenbaum Y."/>
            <person name="Wolfner M.F."/>
        </authorList>
    </citation>
    <scope>INTERACTION WITH OTE</scope>
    <scope>SUBCELLULAR LOCATION</scope>
</reference>
<reference key="11">
    <citation type="journal article" date="2004" name="Eur. J. Cell Biol.">
        <title>Two novel LEM-domain proteins are splice products of the annotated Drosophila melanogaster gene CG9424 (Bocksbeutel).</title>
        <authorList>
            <person name="Wagner N."/>
            <person name="Schmitt J."/>
            <person name="Krohne G."/>
        </authorList>
    </citation>
    <scope>FUNCTION</scope>
    <scope>SUBCELLULAR LOCATION</scope>
</reference>
<reference key="12">
    <citation type="journal article" date="2004" name="J. Cell Sci.">
        <title>The lamin B receptor of Drosophila melanogaster.</title>
        <authorList>
            <person name="Wagner N."/>
            <person name="Weber D."/>
            <person name="Seitz S."/>
            <person name="Krohne G."/>
        </authorList>
    </citation>
    <scope>SUBUNIT</scope>
    <scope>INTERACTION WITH LBR</scope>
</reference>
<reference key="13">
    <citation type="journal article" date="2004" name="Mol. Biol. Cell">
        <title>The functions of Klarsicht and nuclear lamin in developmentally regulated nuclear migrations of photoreceptor cells in the Drosophila eye.</title>
        <authorList>
            <person name="Patterson K."/>
            <person name="Molofsky A.B."/>
            <person name="Robinson C."/>
            <person name="Acosta S."/>
            <person name="Cater C."/>
            <person name="Fischer J.A."/>
        </authorList>
    </citation>
    <scope>FUNCTION</scope>
</reference>
<reference key="14">
    <citation type="journal article" date="2006" name="Eur. J. Cell Biol.">
        <title>The Drosophila melanogaster LEM-domain protein MAN1.</title>
        <authorList>
            <person name="Wagner N."/>
            <person name="Kagermeier B."/>
            <person name="Loserth S."/>
            <person name="Krohne G."/>
        </authorList>
    </citation>
    <scope>FUNCTION</scope>
    <scope>INTERACTION WITH MAN1</scope>
    <scope>SUBCELLULAR LOCATION</scope>
</reference>
<reference key="15">
    <citation type="journal article" date="2008" name="Genetics">
        <title>Tissue-specific defects are caused by loss of the Drosophila MAN1 LEM domain protein.</title>
        <authorList>
            <person name="Pinto B.S."/>
            <person name="Wilmington S.R."/>
            <person name="Hornick E.E."/>
            <person name="Wallrath L.L."/>
            <person name="Geyer P.K."/>
        </authorList>
    </citation>
    <scope>SUBCELLULAR LOCATION</scope>
</reference>
<reference key="16">
    <citation type="journal article" date="2008" name="J. Proteome Res.">
        <title>Phosphoproteome analysis of Drosophila melanogaster embryos.</title>
        <authorList>
            <person name="Zhai B."/>
            <person name="Villen J."/>
            <person name="Beausoleil S.A."/>
            <person name="Mintseris J."/>
            <person name="Gygi S.P."/>
        </authorList>
    </citation>
    <scope>PHOSPHORYLATION [LARGE SCALE ANALYSIS] AT THR-10; THR-12; THR-20; SER-25; SER-34; THR-39; SER-41; SER-42; SER-45; THR-47; SER-235; TYR-249; SER-250; SER-311; THR-413; THR-435; SER-442; SER-455; SER-459; SER-595; THR-597 AND SER-615</scope>
    <scope>IDENTIFICATION BY MASS SPECTROMETRY</scope>
    <source>
        <tissue>Embryo</tissue>
    </source>
</reference>
<reference key="17">
    <citation type="journal article" date="2012" name="Mol. Cell. Biol.">
        <title>Functional analysis of centrosomal kinase substrates in Drosophila melanogaster reveals a new function of the nuclear envelope component otefin in cell cycle progression.</title>
        <authorList>
            <person name="Habermann K."/>
            <person name="Mirgorodskaya E."/>
            <person name="Gobom J."/>
            <person name="Lehmann V."/>
            <person name="Mueller H."/>
            <person name="Bluemlein K."/>
            <person name="Deery M.J."/>
            <person name="Czogiel I."/>
            <person name="Erdmann C."/>
            <person name="Ralser M."/>
            <person name="von Kries J.P."/>
            <person name="Lange B.M."/>
        </authorList>
    </citation>
    <scope>INTERACTION WITH OTE</scope>
</reference>
<reference key="18">
    <citation type="journal article" date="2016" name="Biol. Open">
        <title>B-type nuclear lamin and the nuclear pore complex Nup107-160 influences maintenance of the spindle envelope required for cytokinesis in Drosophila male meiosis.</title>
        <authorList>
            <person name="Hayashi D."/>
            <person name="Tanabe K."/>
            <person name="Katsube H."/>
            <person name="Inoue Y.H."/>
        </authorList>
    </citation>
    <scope>FUNCTION</scope>
    <scope>SUBCELLULAR LOCATION</scope>
    <scope>TISSUE SPECIFICITY</scope>
    <scope>DISRUPTION PHENOTYPE</scope>
</reference>
<protein>
    <recommendedName>
        <fullName evidence="19">Lamin Dm0</fullName>
    </recommendedName>
</protein>
<feature type="initiator methionine" description="Removed" evidence="1">
    <location>
        <position position="1"/>
    </location>
</feature>
<feature type="chain" id="PRO_0000063828" description="Lamin Dm0">
    <location>
        <begin position="2"/>
        <end position="619"/>
    </location>
</feature>
<feature type="propeptide" id="PRO_0000396785" description="Removed in mature form" evidence="1">
    <location>
        <begin position="620"/>
        <end position="622"/>
    </location>
</feature>
<feature type="domain" description="IF rod" evidence="4">
    <location>
        <begin position="54"/>
        <end position="410"/>
    </location>
</feature>
<feature type="domain" description="LTD" evidence="3">
    <location>
        <begin position="461"/>
        <end position="588"/>
    </location>
</feature>
<feature type="region of interest" description="Disordered" evidence="5">
    <location>
        <begin position="1"/>
        <end position="50"/>
    </location>
</feature>
<feature type="region of interest" description="Head">
    <location>
        <begin position="2"/>
        <end position="56"/>
    </location>
</feature>
<feature type="region of interest" description="Coil 1A">
    <location>
        <begin position="55"/>
        <end position="91"/>
    </location>
</feature>
<feature type="region of interest" description="Linker 1">
    <location>
        <begin position="92"/>
        <end position="103"/>
    </location>
</feature>
<feature type="region of interest" description="Coil 1B">
    <location>
        <begin position="104"/>
        <end position="241"/>
    </location>
</feature>
<feature type="region of interest" description="Linker 2">
    <location>
        <begin position="242"/>
        <end position="265"/>
    </location>
</feature>
<feature type="region of interest" description="Coil 2">
    <location>
        <begin position="266"/>
        <end position="408"/>
    </location>
</feature>
<feature type="region of interest" description="Tail">
    <location>
        <begin position="409"/>
        <end position="619"/>
    </location>
</feature>
<feature type="region of interest" description="Disordered" evidence="5">
    <location>
        <begin position="429"/>
        <end position="448"/>
    </location>
</feature>
<feature type="region of interest" description="Disordered" evidence="5">
    <location>
        <begin position="603"/>
        <end position="622"/>
    </location>
</feature>
<feature type="short sequence motif" description="Nuclear localization signal" evidence="2">
    <location>
        <begin position="446"/>
        <end position="451"/>
    </location>
</feature>
<feature type="compositionally biased region" description="Pro residues" evidence="5">
    <location>
        <begin position="21"/>
        <end position="34"/>
    </location>
</feature>
<feature type="compositionally biased region" description="Polar residues" evidence="5">
    <location>
        <begin position="429"/>
        <end position="440"/>
    </location>
</feature>
<feature type="compositionally biased region" description="Polar residues" evidence="5">
    <location>
        <begin position="605"/>
        <end position="622"/>
    </location>
</feature>
<feature type="site" description="Heptad change of phase">
    <location>
        <position position="289"/>
    </location>
</feature>
<feature type="site" description="Heptad change of phase">
    <location>
        <position position="353"/>
    </location>
</feature>
<feature type="modified residue" description="N-acetylserine" evidence="1">
    <location>
        <position position="2"/>
    </location>
</feature>
<feature type="modified residue" description="Phosphothreonine" evidence="10 14">
    <location>
        <position position="10"/>
    </location>
</feature>
<feature type="modified residue" description="Phosphothreonine" evidence="10 14">
    <location>
        <position position="12"/>
    </location>
</feature>
<feature type="modified residue" description="Phosphothreonine" evidence="10 14">
    <location>
        <position position="20"/>
    </location>
</feature>
<feature type="modified residue" description="Phosphoserine" evidence="10 14">
    <location>
        <position position="25"/>
    </location>
</feature>
<feature type="modified residue" description="Phosphoserine" evidence="10 14">
    <location>
        <position position="34"/>
    </location>
</feature>
<feature type="modified residue" description="Phosphothreonine" evidence="10 14">
    <location>
        <position position="39"/>
    </location>
</feature>
<feature type="modified residue" description="Phosphoserine" evidence="10 14">
    <location>
        <position position="41"/>
    </location>
</feature>
<feature type="modified residue" description="Phosphoserine" evidence="10 14">
    <location>
        <position position="42"/>
    </location>
</feature>
<feature type="modified residue" description="Phosphoserine" evidence="10 14">
    <location>
        <position position="45"/>
    </location>
</feature>
<feature type="modified residue" description="Phosphothreonine" evidence="10 14">
    <location>
        <position position="47"/>
    </location>
</feature>
<feature type="modified residue" description="Phosphoserine" evidence="10 14">
    <location>
        <position position="235"/>
    </location>
</feature>
<feature type="modified residue" description="Phosphotyrosine" evidence="10 14">
    <location>
        <position position="249"/>
    </location>
</feature>
<feature type="modified residue" description="Phosphoserine" evidence="10 14">
    <location>
        <position position="250"/>
    </location>
</feature>
<feature type="modified residue" description="Phosphoserine" evidence="10 14">
    <location>
        <position position="311"/>
    </location>
</feature>
<feature type="modified residue" description="Phosphothreonine" evidence="10 14">
    <location>
        <position position="413"/>
    </location>
</feature>
<feature type="modified residue" description="Phosphothreonine" evidence="10 14">
    <location>
        <position position="435"/>
    </location>
</feature>
<feature type="modified residue" description="Phosphoserine" evidence="10 14">
    <location>
        <position position="442"/>
    </location>
</feature>
<feature type="modified residue" description="Phosphoserine" evidence="10 14">
    <location>
        <position position="455"/>
    </location>
</feature>
<feature type="modified residue" description="Phosphoserine" evidence="10">
    <location>
        <position position="459"/>
    </location>
</feature>
<feature type="modified residue" description="Phosphoserine" evidence="10 14">
    <location>
        <position position="595"/>
    </location>
</feature>
<feature type="modified residue" description="Phosphothreonine" evidence="10">
    <location>
        <position position="597"/>
    </location>
</feature>
<feature type="modified residue" description="Phosphoserine" evidence="10 14">
    <location>
        <position position="615"/>
    </location>
</feature>
<feature type="modified residue" description="Cysteine methyl ester" evidence="1">
    <location>
        <position position="619"/>
    </location>
</feature>
<feature type="lipid moiety-binding region" description="S-farnesyl cysteine" evidence="1">
    <location>
        <position position="619"/>
    </location>
</feature>
<feature type="sequence conflict" description="In Ref. 1; CAA30259." evidence="19" ref="1">
    <original>E</original>
    <variation>R</variation>
    <location>
        <position position="135"/>
    </location>
</feature>
<feature type="sequence conflict" description="In Ref. 1; CAA30259." evidence="19" ref="1">
    <original>EL</original>
    <variation>DV</variation>
    <location>
        <begin position="270"/>
        <end position="271"/>
    </location>
</feature>
<feature type="sequence conflict" description="In Ref. 1; CAA30259/CAA34351." evidence="19" ref="1">
    <original>Y</original>
    <variation>I</variation>
    <location>
        <position position="290"/>
    </location>
</feature>
<dbReference type="EMBL" id="X07278">
    <property type="protein sequence ID" value="CAA30259.1"/>
    <property type="molecule type" value="mRNA"/>
</dbReference>
<dbReference type="EMBL" id="X16275">
    <property type="protein sequence ID" value="CAA34351.1"/>
    <property type="molecule type" value="Genomic_DNA"/>
</dbReference>
<dbReference type="EMBL" id="AE014134">
    <property type="protein sequence ID" value="AAF52262.1"/>
    <property type="molecule type" value="Genomic_DNA"/>
</dbReference>
<dbReference type="EMBL" id="BT001506">
    <property type="protein sequence ID" value="AAN71261.1"/>
    <property type="molecule type" value="mRNA"/>
</dbReference>
<dbReference type="PIR" id="A29965">
    <property type="entry name" value="A29965"/>
</dbReference>
<dbReference type="PIR" id="A37103">
    <property type="entry name" value="A37103"/>
</dbReference>
<dbReference type="RefSeq" id="NP_001245892.1">
    <property type="nucleotide sequence ID" value="NM_001258963.2"/>
</dbReference>
<dbReference type="RefSeq" id="NP_001245893.1">
    <property type="nucleotide sequence ID" value="NM_001258964.2"/>
</dbReference>
<dbReference type="RefSeq" id="NP_001285629.1">
    <property type="nucleotide sequence ID" value="NM_001298700.1"/>
</dbReference>
<dbReference type="RefSeq" id="NP_476616.1">
    <property type="nucleotide sequence ID" value="NM_057268.5"/>
</dbReference>
<dbReference type="SMR" id="P08928"/>
<dbReference type="BioGRID" id="59950">
    <property type="interactions" value="45"/>
</dbReference>
<dbReference type="DIP" id="DIP-2663N"/>
<dbReference type="FunCoup" id="P08928">
    <property type="interactions" value="1751"/>
</dbReference>
<dbReference type="IntAct" id="P08928">
    <property type="interactions" value="25"/>
</dbReference>
<dbReference type="MINT" id="P08928"/>
<dbReference type="STRING" id="7227.FBpp0297902"/>
<dbReference type="GlyGen" id="P08928">
    <property type="glycosylation" value="1 site"/>
</dbReference>
<dbReference type="iPTMnet" id="P08928"/>
<dbReference type="PaxDb" id="7227-FBpp0078733"/>
<dbReference type="EnsemblMetazoa" id="FBtr0079100">
    <property type="protein sequence ID" value="FBpp0078733"/>
    <property type="gene ID" value="FBgn0002525"/>
</dbReference>
<dbReference type="EnsemblMetazoa" id="FBtr0307058">
    <property type="protein sequence ID" value="FBpp0297901"/>
    <property type="gene ID" value="FBgn0002525"/>
</dbReference>
<dbReference type="EnsemblMetazoa" id="FBtr0307059">
    <property type="protein sequence ID" value="FBpp0297902"/>
    <property type="gene ID" value="FBgn0002525"/>
</dbReference>
<dbReference type="EnsemblMetazoa" id="FBtr0346460">
    <property type="protein sequence ID" value="FBpp0312110"/>
    <property type="gene ID" value="FBgn0002525"/>
</dbReference>
<dbReference type="GeneID" id="33782"/>
<dbReference type="KEGG" id="dme:Dmel_CG6944"/>
<dbReference type="AGR" id="FB:FBgn0002525"/>
<dbReference type="CTD" id="33782"/>
<dbReference type="FlyBase" id="FBgn0002525">
    <property type="gene designation" value="Lam"/>
</dbReference>
<dbReference type="VEuPathDB" id="VectorBase:FBgn0002525"/>
<dbReference type="eggNOG" id="KOG0977">
    <property type="taxonomic scope" value="Eukaryota"/>
</dbReference>
<dbReference type="GeneTree" id="ENSGT00940000168319"/>
<dbReference type="HOGENOM" id="CLU_012560_9_2_1"/>
<dbReference type="InParanoid" id="P08928"/>
<dbReference type="OMA" id="QAGEKCA"/>
<dbReference type="OrthoDB" id="102442at2759"/>
<dbReference type="PhylomeDB" id="P08928"/>
<dbReference type="Reactome" id="R-DME-4419969">
    <property type="pathway name" value="Depolymerization of the Nuclear Lamina"/>
</dbReference>
<dbReference type="Reactome" id="R-DME-9013405">
    <property type="pathway name" value="RHOD GTPase cycle"/>
</dbReference>
<dbReference type="Reactome" id="R-DME-9035034">
    <property type="pathway name" value="RHOF GTPase cycle"/>
</dbReference>
<dbReference type="SignaLink" id="P08928"/>
<dbReference type="BioGRID-ORCS" id="33782">
    <property type="hits" value="0 hits in 3 CRISPR screens"/>
</dbReference>
<dbReference type="ChiTaRS" id="Lam">
    <property type="organism name" value="fly"/>
</dbReference>
<dbReference type="GenomeRNAi" id="33782"/>
<dbReference type="PRO" id="PR:P08928"/>
<dbReference type="Proteomes" id="UP000000803">
    <property type="component" value="Chromosome 2L"/>
</dbReference>
<dbReference type="Bgee" id="FBgn0002525">
    <property type="expression patterns" value="Expressed in adult tracheocyte (Drosophila) in open tracheal system trachea and 190 other cell types or tissues"/>
</dbReference>
<dbReference type="ExpressionAtlas" id="P08928">
    <property type="expression patterns" value="baseline and differential"/>
</dbReference>
<dbReference type="GO" id="GO:0005737">
    <property type="term" value="C:cytoplasm"/>
    <property type="evidence" value="ECO:0007669"/>
    <property type="project" value="UniProtKB-SubCell"/>
</dbReference>
<dbReference type="GO" id="GO:0005638">
    <property type="term" value="C:lamin filament"/>
    <property type="evidence" value="ECO:0000314"/>
    <property type="project" value="FlyBase"/>
</dbReference>
<dbReference type="GO" id="GO:0005635">
    <property type="term" value="C:nuclear envelope"/>
    <property type="evidence" value="ECO:0000314"/>
    <property type="project" value="FlyBase"/>
</dbReference>
<dbReference type="GO" id="GO:0005641">
    <property type="term" value="C:nuclear envelope lumen"/>
    <property type="evidence" value="ECO:0000314"/>
    <property type="project" value="UniProtKB"/>
</dbReference>
<dbReference type="GO" id="GO:0005637">
    <property type="term" value="C:nuclear inner membrane"/>
    <property type="evidence" value="ECO:0007669"/>
    <property type="project" value="UniProtKB-SubCell"/>
</dbReference>
<dbReference type="GO" id="GO:0005652">
    <property type="term" value="C:nuclear lamina"/>
    <property type="evidence" value="ECO:0000314"/>
    <property type="project" value="UniProtKB"/>
</dbReference>
<dbReference type="GO" id="GO:0005634">
    <property type="term" value="C:nucleus"/>
    <property type="evidence" value="ECO:0000314"/>
    <property type="project" value="FlyBase"/>
</dbReference>
<dbReference type="GO" id="GO:0000922">
    <property type="term" value="C:spindle pole"/>
    <property type="evidence" value="ECO:0007669"/>
    <property type="project" value="UniProtKB-SubCell"/>
</dbReference>
<dbReference type="GO" id="GO:0003682">
    <property type="term" value="F:chromatin binding"/>
    <property type="evidence" value="ECO:0000314"/>
    <property type="project" value="FlyBase"/>
</dbReference>
<dbReference type="GO" id="GO:0005102">
    <property type="term" value="F:signaling receptor binding"/>
    <property type="evidence" value="ECO:0000353"/>
    <property type="project" value="UniProtKB"/>
</dbReference>
<dbReference type="GO" id="GO:0005200">
    <property type="term" value="F:structural constituent of cytoskeleton"/>
    <property type="evidence" value="ECO:0000315"/>
    <property type="project" value="FlyBase"/>
</dbReference>
<dbReference type="GO" id="GO:0007417">
    <property type="term" value="P:central nervous system development"/>
    <property type="evidence" value="ECO:0000315"/>
    <property type="project" value="FlyBase"/>
</dbReference>
<dbReference type="GO" id="GO:0040003">
    <property type="term" value="P:chitin-based cuticle development"/>
    <property type="evidence" value="ECO:0000315"/>
    <property type="project" value="FlyBase"/>
</dbReference>
<dbReference type="GO" id="GO:0001745">
    <property type="term" value="P:compound eye morphogenesis"/>
    <property type="evidence" value="ECO:0000315"/>
    <property type="project" value="FlyBase"/>
</dbReference>
<dbReference type="GO" id="GO:0048546">
    <property type="term" value="P:digestive tract morphogenesis"/>
    <property type="evidence" value="ECO:0000315"/>
    <property type="project" value="FlyBase"/>
</dbReference>
<dbReference type="GO" id="GO:0035262">
    <property type="term" value="P:gonad morphogenesis"/>
    <property type="evidence" value="ECO:0000315"/>
    <property type="project" value="FlyBase"/>
</dbReference>
<dbReference type="GO" id="GO:0031507">
    <property type="term" value="P:heterochromatin formation"/>
    <property type="evidence" value="ECO:0000314"/>
    <property type="project" value="FlyBase"/>
</dbReference>
<dbReference type="GO" id="GO:0070828">
    <property type="term" value="P:heterochromatin organization"/>
    <property type="evidence" value="ECO:0000315"/>
    <property type="project" value="FlyBase"/>
</dbReference>
<dbReference type="GO" id="GO:0007112">
    <property type="term" value="P:male meiosis cytokinesis"/>
    <property type="evidence" value="ECO:0000315"/>
    <property type="project" value="UniProtKB"/>
</dbReference>
<dbReference type="GO" id="GO:0007110">
    <property type="term" value="P:meiosis I cytokinesis"/>
    <property type="evidence" value="ECO:0000315"/>
    <property type="project" value="UniProtKB"/>
</dbReference>
<dbReference type="GO" id="GO:0007084">
    <property type="term" value="P:mitotic nuclear membrane reassembly"/>
    <property type="evidence" value="ECO:0000314"/>
    <property type="project" value="FlyBase"/>
</dbReference>
<dbReference type="GO" id="GO:0008285">
    <property type="term" value="P:negative regulation of cell population proliferation"/>
    <property type="evidence" value="ECO:0000315"/>
    <property type="project" value="FlyBase"/>
</dbReference>
<dbReference type="GO" id="GO:0050777">
    <property type="term" value="P:negative regulation of immune response"/>
    <property type="evidence" value="ECO:0000315"/>
    <property type="project" value="FlyBase"/>
</dbReference>
<dbReference type="GO" id="GO:0006998">
    <property type="term" value="P:nuclear envelope organization"/>
    <property type="evidence" value="ECO:0000315"/>
    <property type="project" value="FlyBase"/>
</dbReference>
<dbReference type="GO" id="GO:0071763">
    <property type="term" value="P:nuclear membrane organization"/>
    <property type="evidence" value="ECO:0000314"/>
    <property type="project" value="FlyBase"/>
</dbReference>
<dbReference type="GO" id="GO:0007097">
    <property type="term" value="P:nuclear migration"/>
    <property type="evidence" value="ECO:0000315"/>
    <property type="project" value="FlyBase"/>
</dbReference>
<dbReference type="GO" id="GO:0051664">
    <property type="term" value="P:nuclear pore localization"/>
    <property type="evidence" value="ECO:0000315"/>
    <property type="project" value="FlyBase"/>
</dbReference>
<dbReference type="GO" id="GO:0006997">
    <property type="term" value="P:nucleus organization"/>
    <property type="evidence" value="ECO:0000315"/>
    <property type="project" value="UniProtKB"/>
</dbReference>
<dbReference type="GO" id="GO:0030838">
    <property type="term" value="P:positive regulation of actin filament polymerization"/>
    <property type="evidence" value="ECO:0000315"/>
    <property type="project" value="UniProtKB"/>
</dbReference>
<dbReference type="GO" id="GO:2000433">
    <property type="term" value="P:positive regulation of cytokinesis, actomyosin contractile ring assembly"/>
    <property type="evidence" value="ECO:0000315"/>
    <property type="project" value="UniProtKB"/>
</dbReference>
<dbReference type="GO" id="GO:1900182">
    <property type="term" value="P:positive regulation of protein localization to nucleus"/>
    <property type="evidence" value="ECO:0000315"/>
    <property type="project" value="UniProtKB"/>
</dbReference>
<dbReference type="GO" id="GO:1905832">
    <property type="term" value="P:positive regulation of spindle assembly"/>
    <property type="evidence" value="ECO:0000315"/>
    <property type="project" value="UniProtKB"/>
</dbReference>
<dbReference type="GO" id="GO:0090435">
    <property type="term" value="P:protein localization to nuclear envelope"/>
    <property type="evidence" value="ECO:0000315"/>
    <property type="project" value="FlyBase"/>
</dbReference>
<dbReference type="GO" id="GO:0048137">
    <property type="term" value="P:spermatocyte division"/>
    <property type="evidence" value="ECO:0000315"/>
    <property type="project" value="UniProtKB"/>
</dbReference>
<dbReference type="GO" id="GO:0007283">
    <property type="term" value="P:spermatogenesis"/>
    <property type="evidence" value="ECO:0000315"/>
    <property type="project" value="FlyBase"/>
</dbReference>
<dbReference type="GO" id="GO:0007430">
    <property type="term" value="P:terminal branching, open tracheal system"/>
    <property type="evidence" value="ECO:0000315"/>
    <property type="project" value="FlyBase"/>
</dbReference>
<dbReference type="FunFam" id="1.20.5.170:FF:000058">
    <property type="entry name" value="Intermediate filament protein B"/>
    <property type="match status" value="1"/>
</dbReference>
<dbReference type="Gene3D" id="1.20.5.170">
    <property type="match status" value="1"/>
</dbReference>
<dbReference type="Gene3D" id="2.60.40.1260">
    <property type="entry name" value="Lamin Tail domain"/>
    <property type="match status" value="1"/>
</dbReference>
<dbReference type="Gene3D" id="1.20.5.500">
    <property type="entry name" value="Single helix bin"/>
    <property type="match status" value="1"/>
</dbReference>
<dbReference type="Gene3D" id="1.20.5.1160">
    <property type="entry name" value="Vasodilator-stimulated phosphoprotein"/>
    <property type="match status" value="2"/>
</dbReference>
<dbReference type="InterPro" id="IPR039008">
    <property type="entry name" value="IF_rod_dom"/>
</dbReference>
<dbReference type="InterPro" id="IPR001322">
    <property type="entry name" value="Lamin_tail_dom"/>
</dbReference>
<dbReference type="InterPro" id="IPR036415">
    <property type="entry name" value="Lamin_tail_dom_sf"/>
</dbReference>
<dbReference type="PANTHER" id="PTHR45721">
    <property type="entry name" value="LAMIN DM0-RELATED"/>
    <property type="match status" value="1"/>
</dbReference>
<dbReference type="PANTHER" id="PTHR45721:SF11">
    <property type="entry name" value="LAMIN DM0-RELATED"/>
    <property type="match status" value="1"/>
</dbReference>
<dbReference type="Pfam" id="PF00038">
    <property type="entry name" value="Filament"/>
    <property type="match status" value="1"/>
</dbReference>
<dbReference type="Pfam" id="PF00932">
    <property type="entry name" value="LTD"/>
    <property type="match status" value="1"/>
</dbReference>
<dbReference type="SMART" id="SM01391">
    <property type="entry name" value="Filament"/>
    <property type="match status" value="1"/>
</dbReference>
<dbReference type="SUPFAM" id="SSF64593">
    <property type="entry name" value="Intermediate filament protein, coiled coil region"/>
    <property type="match status" value="2"/>
</dbReference>
<dbReference type="SUPFAM" id="SSF74853">
    <property type="entry name" value="Lamin A/C globular tail domain"/>
    <property type="match status" value="1"/>
</dbReference>
<dbReference type="PROSITE" id="PS51842">
    <property type="entry name" value="IF_ROD_2"/>
    <property type="match status" value="1"/>
</dbReference>
<dbReference type="PROSITE" id="PS51841">
    <property type="entry name" value="LTD"/>
    <property type="match status" value="1"/>
</dbReference>